<organism>
    <name type="scientific">Ornithorhynchus anatinus</name>
    <name type="common">Duckbill platypus</name>
    <dbReference type="NCBI Taxonomy" id="9258"/>
    <lineage>
        <taxon>Eukaryota</taxon>
        <taxon>Metazoa</taxon>
        <taxon>Chordata</taxon>
        <taxon>Craniata</taxon>
        <taxon>Vertebrata</taxon>
        <taxon>Euteleostomi</taxon>
        <taxon>Mammalia</taxon>
        <taxon>Monotremata</taxon>
        <taxon>Ornithorhynchidae</taxon>
        <taxon>Ornithorhynchus</taxon>
    </lineage>
</organism>
<dbReference type="EC" id="7.1.1.9"/>
<dbReference type="EMBL" id="X83427">
    <property type="protein sequence ID" value="CAA58457.1"/>
    <property type="molecule type" value="Genomic_DNA"/>
</dbReference>
<dbReference type="PIR" id="C58888">
    <property type="entry name" value="C58888"/>
</dbReference>
<dbReference type="SMR" id="Q36452"/>
<dbReference type="FunCoup" id="Q36452">
    <property type="interactions" value="168"/>
</dbReference>
<dbReference type="STRING" id="9258.ENSOANP00000024995"/>
<dbReference type="Ensembl" id="ENSOANT00000028502.1">
    <property type="protein sequence ID" value="ENSOANP00000024995.1"/>
    <property type="gene ID" value="ENSOANG00000019378.1"/>
</dbReference>
<dbReference type="KEGG" id="oaa:808704"/>
<dbReference type="CTD" id="4512"/>
<dbReference type="eggNOG" id="KOG4769">
    <property type="taxonomic scope" value="Eukaryota"/>
</dbReference>
<dbReference type="GeneTree" id="ENSGT00390000001518"/>
<dbReference type="HOGENOM" id="CLU_011899_7_3_1"/>
<dbReference type="InParanoid" id="Q36452"/>
<dbReference type="OMA" id="WAMMSIG"/>
<dbReference type="OrthoDB" id="10002679at2759"/>
<dbReference type="TreeFam" id="TF353096"/>
<dbReference type="UniPathway" id="UPA00705"/>
<dbReference type="Proteomes" id="UP000002279">
    <property type="component" value="Mitochondrion"/>
</dbReference>
<dbReference type="Bgee" id="ENSOANG00000019378">
    <property type="expression patterns" value="Expressed in heart and 7 other cell types or tissues"/>
</dbReference>
<dbReference type="GO" id="GO:0005743">
    <property type="term" value="C:mitochondrial inner membrane"/>
    <property type="evidence" value="ECO:0007669"/>
    <property type="project" value="UniProtKB-SubCell"/>
</dbReference>
<dbReference type="GO" id="GO:0045277">
    <property type="term" value="C:respiratory chain complex IV"/>
    <property type="evidence" value="ECO:0000250"/>
    <property type="project" value="UniProtKB"/>
</dbReference>
<dbReference type="GO" id="GO:0004129">
    <property type="term" value="F:cytochrome-c oxidase activity"/>
    <property type="evidence" value="ECO:0007669"/>
    <property type="project" value="UniProtKB-EC"/>
</dbReference>
<dbReference type="GO" id="GO:0020037">
    <property type="term" value="F:heme binding"/>
    <property type="evidence" value="ECO:0007669"/>
    <property type="project" value="InterPro"/>
</dbReference>
<dbReference type="GO" id="GO:0046872">
    <property type="term" value="F:metal ion binding"/>
    <property type="evidence" value="ECO:0007669"/>
    <property type="project" value="UniProtKB-KW"/>
</dbReference>
<dbReference type="GO" id="GO:0009060">
    <property type="term" value="P:aerobic respiration"/>
    <property type="evidence" value="ECO:0000318"/>
    <property type="project" value="GO_Central"/>
</dbReference>
<dbReference type="GO" id="GO:0006119">
    <property type="term" value="P:oxidative phosphorylation"/>
    <property type="evidence" value="ECO:0007669"/>
    <property type="project" value="UniProtKB-UniPathway"/>
</dbReference>
<dbReference type="GO" id="GO:0022904">
    <property type="term" value="P:respiratory electron transport chain"/>
    <property type="evidence" value="ECO:0000318"/>
    <property type="project" value="GO_Central"/>
</dbReference>
<dbReference type="CDD" id="cd01663">
    <property type="entry name" value="Cyt_c_Oxidase_I"/>
    <property type="match status" value="1"/>
</dbReference>
<dbReference type="FunFam" id="1.20.210.10:FF:000001">
    <property type="entry name" value="Cytochrome c oxidase subunit 1"/>
    <property type="match status" value="1"/>
</dbReference>
<dbReference type="Gene3D" id="1.20.210.10">
    <property type="entry name" value="Cytochrome c oxidase-like, subunit I domain"/>
    <property type="match status" value="1"/>
</dbReference>
<dbReference type="InterPro" id="IPR023616">
    <property type="entry name" value="Cyt_c_oxase-like_su1_dom"/>
</dbReference>
<dbReference type="InterPro" id="IPR036927">
    <property type="entry name" value="Cyt_c_oxase-like_su1_sf"/>
</dbReference>
<dbReference type="InterPro" id="IPR000883">
    <property type="entry name" value="Cyt_C_Oxase_1"/>
</dbReference>
<dbReference type="InterPro" id="IPR023615">
    <property type="entry name" value="Cyt_c_Oxase_su1_BS"/>
</dbReference>
<dbReference type="InterPro" id="IPR033944">
    <property type="entry name" value="Cyt_c_oxase_su1_dom"/>
</dbReference>
<dbReference type="PANTHER" id="PTHR10422">
    <property type="entry name" value="CYTOCHROME C OXIDASE SUBUNIT 1"/>
    <property type="match status" value="1"/>
</dbReference>
<dbReference type="PANTHER" id="PTHR10422:SF18">
    <property type="entry name" value="CYTOCHROME C OXIDASE SUBUNIT 1"/>
    <property type="match status" value="1"/>
</dbReference>
<dbReference type="Pfam" id="PF00115">
    <property type="entry name" value="COX1"/>
    <property type="match status" value="1"/>
</dbReference>
<dbReference type="PRINTS" id="PR01165">
    <property type="entry name" value="CYCOXIDASEI"/>
</dbReference>
<dbReference type="SUPFAM" id="SSF81442">
    <property type="entry name" value="Cytochrome c oxidase subunit I-like"/>
    <property type="match status" value="1"/>
</dbReference>
<dbReference type="PROSITE" id="PS50855">
    <property type="entry name" value="COX1"/>
    <property type="match status" value="1"/>
</dbReference>
<dbReference type="PROSITE" id="PS00077">
    <property type="entry name" value="COX1_CUB"/>
    <property type="match status" value="1"/>
</dbReference>
<name>COX1_ORNAN</name>
<proteinExistence type="inferred from homology"/>
<sequence>MFINRWLFSTNHKDIGTLYLLFGAWAGMAGTALSILIRSELGQPGSLLGDDQIYNVIVTAHAFVMIFFMVMPIMIGGFGNWLVPLMIGAPDMAFPRMNNMSFWLLPPSFLLLLVSSTVEAGAGTGWTVYPPLAGNLAHAGASVDLAIFSLHLAGVSSILGAINFITTIINMKPPAMSQYQTPLFVWSVLITAVLLLLSLPVLAAGITMLLTDRNLNTTFFDPAGGGDPILYQHLFWFFGHPEVYILILPGFGIISHIVTYYSGKKEPFGYMGMVWAMMSIGFLGFIVWAHHMFTVGMDVDTRAYFTSATMIIAIPTGVKVFSWLATLHGGDIKWTPPMLWALGFIFLFTVGGLTGIVLANSSLDIILHDTYYVVAHFHYVLSMGAVFAIMGGFVHWFPLLSGFTLHPTWAKVHFTLMFVGVNLTFFPQHFLGLAGMPRRYSDYPDAYTLWNALSSLGSFVSLTAVMVMIFMIWEAFASKREVLSVELTTTNIEWLHGCPPPYHTFEQPVYIKA</sequence>
<comment type="function">
    <text evidence="3">Component of the cytochrome c oxidase, the last enzyme in the mitochondrial electron transport chain which drives oxidative phosphorylation. The respiratory chain contains 3 multisubunit complexes succinate dehydrogenase (complex II, CII), ubiquinol-cytochrome c oxidoreductase (cytochrome b-c1 complex, complex III, CIII) and cytochrome c oxidase (complex IV, CIV), that cooperate to transfer electrons derived from NADH and succinate to molecular oxygen, creating an electrochemical gradient over the inner membrane that drives transmembrane transport and the ATP synthase. Cytochrome c oxidase is the component of the respiratory chain that catalyzes the reduction of oxygen to water. Electrons originating from reduced cytochrome c in the intermembrane space (IMS) are transferred via the dinuclear copper A center (CU(A)) of subunit 2 and heme A of subunit 1 to the active site in subunit 1, a binuclear center (BNC) formed by heme A3 and copper B (CU(B)). The BNC reduces molecular oxygen to 2 water molecules using 4 electrons from cytochrome c in the IMS and 4 protons from the mitochondrial matrix.</text>
</comment>
<comment type="catalytic activity">
    <reaction evidence="3">
        <text>4 Fe(II)-[cytochrome c] + O2 + 8 H(+)(in) = 4 Fe(III)-[cytochrome c] + 2 H2O + 4 H(+)(out)</text>
        <dbReference type="Rhea" id="RHEA:11436"/>
        <dbReference type="Rhea" id="RHEA-COMP:10350"/>
        <dbReference type="Rhea" id="RHEA-COMP:14399"/>
        <dbReference type="ChEBI" id="CHEBI:15377"/>
        <dbReference type="ChEBI" id="CHEBI:15378"/>
        <dbReference type="ChEBI" id="CHEBI:15379"/>
        <dbReference type="ChEBI" id="CHEBI:29033"/>
        <dbReference type="ChEBI" id="CHEBI:29034"/>
        <dbReference type="EC" id="7.1.1.9"/>
    </reaction>
    <physiologicalReaction direction="left-to-right" evidence="3">
        <dbReference type="Rhea" id="RHEA:11437"/>
    </physiologicalReaction>
</comment>
<comment type="cofactor">
    <cofactor evidence="2">
        <name>heme</name>
        <dbReference type="ChEBI" id="CHEBI:30413"/>
    </cofactor>
    <text evidence="2">Binds 2 heme A groups non-covalently per subunit.</text>
</comment>
<comment type="cofactor">
    <cofactor evidence="2">
        <name>Cu cation</name>
        <dbReference type="ChEBI" id="CHEBI:23378"/>
    </cofactor>
    <text evidence="2">Binds a copper B center.</text>
</comment>
<comment type="pathway">
    <text evidence="3">Energy metabolism; oxidative phosphorylation.</text>
</comment>
<comment type="subunit">
    <text evidence="1 2">Component of the cytochrome c oxidase (complex IV, CIV), a multisubunit enzyme composed of 14 subunits. The complex is composed of a catalytic core of 3 subunits MT-CO1, MT-CO2 and MT-CO3, encoded in the mitochondrial DNA, and 11 supernumerary subunits COX4I, COX5A, COX5B, COX6A, COX6B, COX6C, COX7A, COX7B, COX7C, COX8 and NDUFA4, which are encoded in the nuclear genome. The complex exists as a monomer or a dimer and forms supercomplexes (SCs) in the inner mitochondrial membrane with NADH-ubiquinone oxidoreductase (complex I, CI) and ubiquinol-cytochrome c oxidoreductase (cytochrome b-c1 complex, complex III, CIII), resulting in different assemblies (supercomplex SCI(1)III(2)IV(1) and megacomplex MCI(2)III(2)IV(2)) (By similarity). As a newly synthesized protein, rapidly incorporates into a multi-subunit assembly intermediate in the inner membrane, called MITRAC (mitochondrial translation regulation assembly intermediate of cytochrome c oxidase) complex, whose core components are COA3/MITRAC12 and COX14. Within the MITRAC complex, interacts with COA3 and with SMIM20/MITRAC7; the interaction with SMIM20 stabilizes the newly synthesized MT-CO1 and prevents its premature turnover. Interacts with TMEM177 in a COX20-dependent manner (By similarity).</text>
</comment>
<comment type="subcellular location">
    <subcellularLocation>
        <location evidence="2">Mitochondrion inner membrane</location>
        <topology evidence="2">Multi-pass membrane protein</topology>
    </subcellularLocation>
</comment>
<comment type="similarity">
    <text evidence="4">Belongs to the heme-copper respiratory oxidase family.</text>
</comment>
<accession>Q36452</accession>
<reference key="1">
    <citation type="journal article" date="1996" name="J. Mol. Evol.">
        <title>The mitochondrial genome of a monotreme--the platypus (Ornithorhynchus anatinus).</title>
        <authorList>
            <person name="Janke A."/>
            <person name="Gemmell N.J."/>
            <person name="Feldmaier-Fuchs G."/>
            <person name="von Haeseler A."/>
            <person name="Paabo S."/>
        </authorList>
    </citation>
    <scope>NUCLEOTIDE SEQUENCE [LARGE SCALE GENOMIC DNA]</scope>
    <source>
        <strain evidence="5">Glennie</strain>
    </source>
</reference>
<gene>
    <name type="primary">MT-CO1</name>
    <name type="synonym">COI</name>
    <name type="synonym">COXI</name>
    <name type="synonym">MTCO1</name>
</gene>
<geneLocation type="mitochondrion"/>
<protein>
    <recommendedName>
        <fullName>Cytochrome c oxidase subunit 1</fullName>
        <ecNumber>7.1.1.9</ecNumber>
    </recommendedName>
    <alternativeName>
        <fullName>Cytochrome c oxidase polypeptide I</fullName>
    </alternativeName>
</protein>
<keyword id="KW-0106">Calcium</keyword>
<keyword id="KW-0186">Copper</keyword>
<keyword id="KW-0249">Electron transport</keyword>
<keyword id="KW-0349">Heme</keyword>
<keyword id="KW-0408">Iron</keyword>
<keyword id="KW-0460">Magnesium</keyword>
<keyword id="KW-0472">Membrane</keyword>
<keyword id="KW-0479">Metal-binding</keyword>
<keyword id="KW-0496">Mitochondrion</keyword>
<keyword id="KW-0999">Mitochondrion inner membrane</keyword>
<keyword id="KW-1185">Reference proteome</keyword>
<keyword id="KW-0679">Respiratory chain</keyword>
<keyword id="KW-0915">Sodium</keyword>
<keyword id="KW-1278">Translocase</keyword>
<keyword id="KW-0812">Transmembrane</keyword>
<keyword id="KW-1133">Transmembrane helix</keyword>
<keyword id="KW-0813">Transport</keyword>
<feature type="chain" id="PRO_0000183371" description="Cytochrome c oxidase subunit 1">
    <location>
        <begin position="1"/>
        <end position="513"/>
    </location>
</feature>
<feature type="topological domain" description="Mitochondrial matrix" evidence="2">
    <location>
        <begin position="1"/>
        <end position="11"/>
    </location>
</feature>
<feature type="transmembrane region" description="Helical; Name=I" evidence="2">
    <location>
        <begin position="12"/>
        <end position="40"/>
    </location>
</feature>
<feature type="topological domain" description="Mitochondrial intermembrane" evidence="2">
    <location>
        <begin position="41"/>
        <end position="50"/>
    </location>
</feature>
<feature type="transmembrane region" description="Helical; Name=II" evidence="2">
    <location>
        <begin position="51"/>
        <end position="86"/>
    </location>
</feature>
<feature type="topological domain" description="Mitochondrial matrix" evidence="2">
    <location>
        <begin position="87"/>
        <end position="94"/>
    </location>
</feature>
<feature type="transmembrane region" description="Helical; Name=III" evidence="2">
    <location>
        <begin position="95"/>
        <end position="117"/>
    </location>
</feature>
<feature type="topological domain" description="Mitochondrial intermembrane" evidence="2">
    <location>
        <begin position="118"/>
        <end position="140"/>
    </location>
</feature>
<feature type="transmembrane region" description="Helical; Name=IV" evidence="2">
    <location>
        <begin position="141"/>
        <end position="170"/>
    </location>
</feature>
<feature type="topological domain" description="Mitochondrial matrix" evidence="2">
    <location>
        <begin position="171"/>
        <end position="182"/>
    </location>
</feature>
<feature type="transmembrane region" description="Helical; Name=V" evidence="2">
    <location>
        <begin position="183"/>
        <end position="212"/>
    </location>
</feature>
<feature type="topological domain" description="Mitochondrial intermembrane" evidence="2">
    <location>
        <begin position="213"/>
        <end position="227"/>
    </location>
</feature>
<feature type="transmembrane region" description="Helical; Name=VI" evidence="2">
    <location>
        <begin position="228"/>
        <end position="261"/>
    </location>
</feature>
<feature type="topological domain" description="Mitochondrial matrix" evidence="2">
    <location>
        <begin position="262"/>
        <end position="269"/>
    </location>
</feature>
<feature type="transmembrane region" description="Helical; Name=VII" evidence="2">
    <location>
        <begin position="270"/>
        <end position="286"/>
    </location>
</feature>
<feature type="topological domain" description="Mitochondrial intermembrane" evidence="2">
    <location>
        <begin position="287"/>
        <end position="298"/>
    </location>
</feature>
<feature type="transmembrane region" description="Helical; Name=VIII" evidence="2">
    <location>
        <begin position="299"/>
        <end position="327"/>
    </location>
</feature>
<feature type="topological domain" description="Mitochondrial matrix" evidence="2">
    <location>
        <begin position="328"/>
        <end position="335"/>
    </location>
</feature>
<feature type="transmembrane region" description="Helical; Name=IX" evidence="2">
    <location>
        <begin position="336"/>
        <end position="357"/>
    </location>
</feature>
<feature type="topological domain" description="Mitochondrial intermembrane" evidence="2">
    <location>
        <begin position="358"/>
        <end position="370"/>
    </location>
</feature>
<feature type="transmembrane region" description="Helical; Name=X" evidence="2">
    <location>
        <begin position="371"/>
        <end position="400"/>
    </location>
</feature>
<feature type="topological domain" description="Mitochondrial matrix" evidence="2">
    <location>
        <begin position="401"/>
        <end position="406"/>
    </location>
</feature>
<feature type="transmembrane region" description="Helical; Name=XI" evidence="2">
    <location>
        <begin position="407"/>
        <end position="433"/>
    </location>
</feature>
<feature type="topological domain" description="Mitochondrial intermembrane" evidence="2">
    <location>
        <begin position="434"/>
        <end position="446"/>
    </location>
</feature>
<feature type="transmembrane region" description="Helical; Name=XII" evidence="2">
    <location>
        <begin position="447"/>
        <end position="478"/>
    </location>
</feature>
<feature type="topological domain" description="Mitochondrial matrix" evidence="2">
    <location>
        <begin position="479"/>
        <end position="513"/>
    </location>
</feature>
<feature type="binding site" evidence="2">
    <location>
        <position position="40"/>
    </location>
    <ligand>
        <name>Na(+)</name>
        <dbReference type="ChEBI" id="CHEBI:29101"/>
    </ligand>
</feature>
<feature type="binding site" evidence="2">
    <location>
        <position position="45"/>
    </location>
    <ligand>
        <name>Na(+)</name>
        <dbReference type="ChEBI" id="CHEBI:29101"/>
    </ligand>
</feature>
<feature type="binding site" description="axial binding residue" evidence="2">
    <location>
        <position position="61"/>
    </location>
    <ligand>
        <name>Fe(II)-heme a</name>
        <dbReference type="ChEBI" id="CHEBI:61715"/>
        <note>low-spin</note>
    </ligand>
    <ligandPart>
        <name>Fe</name>
        <dbReference type="ChEBI" id="CHEBI:18248"/>
    </ligandPart>
</feature>
<feature type="binding site" evidence="2">
    <location>
        <position position="240"/>
    </location>
    <ligand>
        <name>Cu cation</name>
        <dbReference type="ChEBI" id="CHEBI:23378"/>
        <label>B</label>
    </ligand>
</feature>
<feature type="binding site" evidence="2">
    <location>
        <position position="244"/>
    </location>
    <ligand>
        <name>O2</name>
        <dbReference type="ChEBI" id="CHEBI:15379"/>
    </ligand>
</feature>
<feature type="binding site" evidence="2">
    <location>
        <position position="290"/>
    </location>
    <ligand>
        <name>Cu cation</name>
        <dbReference type="ChEBI" id="CHEBI:23378"/>
        <label>B</label>
    </ligand>
</feature>
<feature type="binding site" evidence="2">
    <location>
        <position position="291"/>
    </location>
    <ligand>
        <name>Cu cation</name>
        <dbReference type="ChEBI" id="CHEBI:23378"/>
        <label>B</label>
    </ligand>
</feature>
<feature type="binding site" evidence="2">
    <location>
        <position position="368"/>
    </location>
    <ligand>
        <name>Mg(2+)</name>
        <dbReference type="ChEBI" id="CHEBI:18420"/>
        <note>ligand shared with MT-CO2</note>
    </ligand>
</feature>
<feature type="binding site" evidence="2">
    <location>
        <position position="369"/>
    </location>
    <ligand>
        <name>Mg(2+)</name>
        <dbReference type="ChEBI" id="CHEBI:18420"/>
        <note>ligand shared with MT-CO2</note>
    </ligand>
</feature>
<feature type="binding site" description="axial binding residue" evidence="2">
    <location>
        <position position="376"/>
    </location>
    <ligand>
        <name>heme a3</name>
        <dbReference type="ChEBI" id="CHEBI:83282"/>
        <note>high-spin</note>
    </ligand>
    <ligandPart>
        <name>Fe</name>
        <dbReference type="ChEBI" id="CHEBI:18248"/>
    </ligandPart>
</feature>
<feature type="binding site" description="axial binding residue" evidence="2">
    <location>
        <position position="378"/>
    </location>
    <ligand>
        <name>Fe(II)-heme a</name>
        <dbReference type="ChEBI" id="CHEBI:61715"/>
        <note>low-spin</note>
    </ligand>
    <ligandPart>
        <name>Fe</name>
        <dbReference type="ChEBI" id="CHEBI:18248"/>
    </ligandPart>
</feature>
<feature type="binding site" evidence="2">
    <location>
        <position position="441"/>
    </location>
    <ligand>
        <name>Na(+)</name>
        <dbReference type="ChEBI" id="CHEBI:29101"/>
    </ligand>
</feature>
<feature type="cross-link" description="1'-histidyl-3'-tyrosine (His-Tyr)" evidence="2">
    <location>
        <begin position="240"/>
        <end position="244"/>
    </location>
</feature>
<evidence type="ECO:0000250" key="1">
    <source>
        <dbReference type="UniProtKB" id="P00395"/>
    </source>
</evidence>
<evidence type="ECO:0000250" key="2">
    <source>
        <dbReference type="UniProtKB" id="P00396"/>
    </source>
</evidence>
<evidence type="ECO:0000250" key="3">
    <source>
        <dbReference type="UniProtKB" id="P00401"/>
    </source>
</evidence>
<evidence type="ECO:0000305" key="4"/>
<evidence type="ECO:0000312" key="5">
    <source>
        <dbReference type="Proteomes" id="UP000002279"/>
    </source>
</evidence>